<organism>
    <name type="scientific">Cupriavidus taiwanensis (strain DSM 17343 / BCRC 17206 / CCUG 44338 / CIP 107171 / LMG 19424 / R1)</name>
    <name type="common">Ralstonia taiwanensis (strain LMG 19424)</name>
    <dbReference type="NCBI Taxonomy" id="977880"/>
    <lineage>
        <taxon>Bacteria</taxon>
        <taxon>Pseudomonadati</taxon>
        <taxon>Pseudomonadota</taxon>
        <taxon>Betaproteobacteria</taxon>
        <taxon>Burkholderiales</taxon>
        <taxon>Burkholderiaceae</taxon>
        <taxon>Cupriavidus</taxon>
    </lineage>
</organism>
<gene>
    <name type="ordered locus">RALTA_A0998</name>
</gene>
<proteinExistence type="inferred from homology"/>
<protein>
    <recommendedName>
        <fullName evidence="1">Adenine deaminase</fullName>
        <shortName evidence="1">ADE</shortName>
        <ecNumber evidence="1">3.5.4.2</ecNumber>
    </recommendedName>
    <alternativeName>
        <fullName evidence="1">Adenine aminohydrolase</fullName>
        <shortName evidence="1">AAH</shortName>
    </alternativeName>
</protein>
<comment type="function">
    <text evidence="1">Catalyzes the hydrolytic deamination of adenine to hypoxanthine. Plays an important role in the purine salvage pathway and in nitrogen catabolism.</text>
</comment>
<comment type="catalytic activity">
    <reaction evidence="1">
        <text>adenine + H2O + H(+) = hypoxanthine + NH4(+)</text>
        <dbReference type="Rhea" id="RHEA:23688"/>
        <dbReference type="ChEBI" id="CHEBI:15377"/>
        <dbReference type="ChEBI" id="CHEBI:15378"/>
        <dbReference type="ChEBI" id="CHEBI:16708"/>
        <dbReference type="ChEBI" id="CHEBI:17368"/>
        <dbReference type="ChEBI" id="CHEBI:28938"/>
        <dbReference type="EC" id="3.5.4.2"/>
    </reaction>
</comment>
<comment type="cofactor">
    <cofactor evidence="1">
        <name>Zn(2+)</name>
        <dbReference type="ChEBI" id="CHEBI:29105"/>
    </cofactor>
    <text evidence="1">Binds 1 zinc ion per subunit.</text>
</comment>
<comment type="similarity">
    <text evidence="1">Belongs to the metallo-dependent hydrolases superfamily. Adenosine and AMP deaminases family. Adenine deaminase type 2 subfamily.</text>
</comment>
<keyword id="KW-0378">Hydrolase</keyword>
<keyword id="KW-0479">Metal-binding</keyword>
<keyword id="KW-0546">Nucleotide metabolism</keyword>
<keyword id="KW-0862">Zinc</keyword>
<dbReference type="EC" id="3.5.4.2" evidence="1"/>
<dbReference type="EMBL" id="CU633749">
    <property type="protein sequence ID" value="CAQ68963.1"/>
    <property type="molecule type" value="Genomic_DNA"/>
</dbReference>
<dbReference type="RefSeq" id="WP_012352296.1">
    <property type="nucleotide sequence ID" value="NC_010528.1"/>
</dbReference>
<dbReference type="SMR" id="B3R3T1"/>
<dbReference type="GeneID" id="29760436"/>
<dbReference type="KEGG" id="cti:RALTA_A0998"/>
<dbReference type="eggNOG" id="COG1816">
    <property type="taxonomic scope" value="Bacteria"/>
</dbReference>
<dbReference type="HOGENOM" id="CLU_039228_7_0_4"/>
<dbReference type="BioCyc" id="CTAI977880:RALTA_RS04735-MONOMER"/>
<dbReference type="Proteomes" id="UP000001692">
    <property type="component" value="Chromosome 1"/>
</dbReference>
<dbReference type="GO" id="GO:0005829">
    <property type="term" value="C:cytosol"/>
    <property type="evidence" value="ECO:0007669"/>
    <property type="project" value="TreeGrafter"/>
</dbReference>
<dbReference type="GO" id="GO:0000034">
    <property type="term" value="F:adenine deaminase activity"/>
    <property type="evidence" value="ECO:0007669"/>
    <property type="project" value="UniProtKB-UniRule"/>
</dbReference>
<dbReference type="GO" id="GO:0008270">
    <property type="term" value="F:zinc ion binding"/>
    <property type="evidence" value="ECO:0007669"/>
    <property type="project" value="UniProtKB-UniRule"/>
</dbReference>
<dbReference type="GO" id="GO:0006146">
    <property type="term" value="P:adenine catabolic process"/>
    <property type="evidence" value="ECO:0007669"/>
    <property type="project" value="UniProtKB-UniRule"/>
</dbReference>
<dbReference type="GO" id="GO:0043103">
    <property type="term" value="P:hypoxanthine salvage"/>
    <property type="evidence" value="ECO:0007669"/>
    <property type="project" value="UniProtKB-UniRule"/>
</dbReference>
<dbReference type="GO" id="GO:0009117">
    <property type="term" value="P:nucleotide metabolic process"/>
    <property type="evidence" value="ECO:0007669"/>
    <property type="project" value="UniProtKB-KW"/>
</dbReference>
<dbReference type="CDD" id="cd01320">
    <property type="entry name" value="ADA"/>
    <property type="match status" value="1"/>
</dbReference>
<dbReference type="FunFam" id="3.20.20.140:FF:000039">
    <property type="entry name" value="Adenine deaminase"/>
    <property type="match status" value="1"/>
</dbReference>
<dbReference type="Gene3D" id="3.20.20.140">
    <property type="entry name" value="Metal-dependent hydrolases"/>
    <property type="match status" value="1"/>
</dbReference>
<dbReference type="HAMAP" id="MF_01962">
    <property type="entry name" value="Adenine_deaminase"/>
    <property type="match status" value="1"/>
</dbReference>
<dbReference type="InterPro" id="IPR001365">
    <property type="entry name" value="A_deaminase_dom"/>
</dbReference>
<dbReference type="InterPro" id="IPR028892">
    <property type="entry name" value="ADE"/>
</dbReference>
<dbReference type="InterPro" id="IPR006330">
    <property type="entry name" value="Ado/ade_deaminase"/>
</dbReference>
<dbReference type="InterPro" id="IPR032466">
    <property type="entry name" value="Metal_Hydrolase"/>
</dbReference>
<dbReference type="NCBIfam" id="TIGR01430">
    <property type="entry name" value="aden_deam"/>
    <property type="match status" value="1"/>
</dbReference>
<dbReference type="NCBIfam" id="NF006850">
    <property type="entry name" value="PRK09358.1-6"/>
    <property type="match status" value="1"/>
</dbReference>
<dbReference type="PANTHER" id="PTHR43114">
    <property type="entry name" value="ADENINE DEAMINASE"/>
    <property type="match status" value="1"/>
</dbReference>
<dbReference type="PANTHER" id="PTHR43114:SF6">
    <property type="entry name" value="ADENINE DEAMINASE"/>
    <property type="match status" value="1"/>
</dbReference>
<dbReference type="Pfam" id="PF00962">
    <property type="entry name" value="A_deaminase"/>
    <property type="match status" value="1"/>
</dbReference>
<dbReference type="SUPFAM" id="SSF51556">
    <property type="entry name" value="Metallo-dependent hydrolases"/>
    <property type="match status" value="1"/>
</dbReference>
<sequence length="351" mass="38700">MTIDAALAEQIRRTPKAELHVHIEGTLEPELIFRLAQRNQVALPYPSVDALRAAYAFTDLQSFLDIYYAGASVLLTEEDFFDMTMDYVKRAVADNVRHAEIFFDPQTHTARGVPIGVVIDGIADALAQARTEYDFSSSLILCFLRHLSEEDAFATLEAALPYRDRFVGVGLDSSEKGNPPEKFARVFARARELGLHLVAHAGEEGPAQYVADALDILKAERIDHGVRAIDDAALVERLARERVALTVCPLSNVKLKVYPDLRDHPLKRMLDAGVAITLHSDDPAYFGGYMNANWEATFDALPLDAADAHKLARNSFEAAFLPAMQKAEFLAEVDHFWSAPPKSPPATAPAA</sequence>
<reference key="1">
    <citation type="journal article" date="2008" name="Genome Res.">
        <title>Genome sequence of the beta-rhizobium Cupriavidus taiwanensis and comparative genomics of rhizobia.</title>
        <authorList>
            <person name="Amadou C."/>
            <person name="Pascal G."/>
            <person name="Mangenot S."/>
            <person name="Glew M."/>
            <person name="Bontemps C."/>
            <person name="Capela D."/>
            <person name="Carrere S."/>
            <person name="Cruveiller S."/>
            <person name="Dossat C."/>
            <person name="Lajus A."/>
            <person name="Marchetti M."/>
            <person name="Poinsot V."/>
            <person name="Rouy Z."/>
            <person name="Servin B."/>
            <person name="Saad M."/>
            <person name="Schenowitz C."/>
            <person name="Barbe V."/>
            <person name="Batut J."/>
            <person name="Medigue C."/>
            <person name="Masson-Boivin C."/>
        </authorList>
    </citation>
    <scope>NUCLEOTIDE SEQUENCE [LARGE SCALE GENOMIC DNA]</scope>
    <source>
        <strain>DSM 17343 / BCRC 17206 / CCUG 44338 / CIP 107171 / LMG 19424 / R1</strain>
    </source>
</reference>
<accession>B3R3T1</accession>
<feature type="chain" id="PRO_1000128838" description="Adenine deaminase">
    <location>
        <begin position="1"/>
        <end position="351"/>
    </location>
</feature>
<feature type="active site" description="Proton donor" evidence="1">
    <location>
        <position position="203"/>
    </location>
</feature>
<feature type="binding site" evidence="1">
    <location>
        <position position="20"/>
    </location>
    <ligand>
        <name>Zn(2+)</name>
        <dbReference type="ChEBI" id="CHEBI:29105"/>
        <note>catalytic</note>
    </ligand>
</feature>
<feature type="binding site" evidence="1">
    <location>
        <position position="22"/>
    </location>
    <ligand>
        <name>Zn(2+)</name>
        <dbReference type="ChEBI" id="CHEBI:29105"/>
        <note>catalytic</note>
    </ligand>
</feature>
<feature type="binding site" evidence="1">
    <location>
        <position position="200"/>
    </location>
    <ligand>
        <name>Zn(2+)</name>
        <dbReference type="ChEBI" id="CHEBI:29105"/>
        <note>catalytic</note>
    </ligand>
</feature>
<feature type="binding site" evidence="1">
    <location>
        <position position="281"/>
    </location>
    <ligand>
        <name>Zn(2+)</name>
        <dbReference type="ChEBI" id="CHEBI:29105"/>
        <note>catalytic</note>
    </ligand>
</feature>
<feature type="binding site" evidence="1">
    <location>
        <position position="282"/>
    </location>
    <ligand>
        <name>substrate</name>
    </ligand>
</feature>
<feature type="site" description="Important for catalytic activity" evidence="1">
    <location>
        <position position="224"/>
    </location>
</feature>
<name>ADE_CUPTR</name>
<evidence type="ECO:0000255" key="1">
    <source>
        <dbReference type="HAMAP-Rule" id="MF_01962"/>
    </source>
</evidence>